<keyword id="KW-0131">Cell cycle</keyword>
<keyword id="KW-0132">Cell division</keyword>
<keyword id="KW-0997">Cell inner membrane</keyword>
<keyword id="KW-1003">Cell membrane</keyword>
<keyword id="KW-0133">Cell shape</keyword>
<keyword id="KW-0961">Cell wall biogenesis/degradation</keyword>
<keyword id="KW-0328">Glycosyltransferase</keyword>
<keyword id="KW-0472">Membrane</keyword>
<keyword id="KW-0573">Peptidoglycan synthesis</keyword>
<keyword id="KW-0808">Transferase</keyword>
<feature type="chain" id="PRO_0000315141" description="UDP-N-acetylglucosamine--N-acetylmuramyl-(pentapeptide) pyrophosphoryl-undecaprenol N-acetylglucosamine transferase">
    <location>
        <begin position="1"/>
        <end position="364"/>
    </location>
</feature>
<feature type="binding site" evidence="1">
    <location>
        <begin position="15"/>
        <end position="17"/>
    </location>
    <ligand>
        <name>UDP-N-acetyl-alpha-D-glucosamine</name>
        <dbReference type="ChEBI" id="CHEBI:57705"/>
    </ligand>
</feature>
<feature type="binding site" evidence="1">
    <location>
        <position position="123"/>
    </location>
    <ligand>
        <name>UDP-N-acetyl-alpha-D-glucosamine</name>
        <dbReference type="ChEBI" id="CHEBI:57705"/>
    </ligand>
</feature>
<feature type="binding site" evidence="1">
    <location>
        <position position="164"/>
    </location>
    <ligand>
        <name>UDP-N-acetyl-alpha-D-glucosamine</name>
        <dbReference type="ChEBI" id="CHEBI:57705"/>
    </ligand>
</feature>
<feature type="binding site" evidence="1">
    <location>
        <position position="191"/>
    </location>
    <ligand>
        <name>UDP-N-acetyl-alpha-D-glucosamine</name>
        <dbReference type="ChEBI" id="CHEBI:57705"/>
    </ligand>
</feature>
<feature type="binding site" evidence="1">
    <location>
        <position position="286"/>
    </location>
    <ligand>
        <name>UDP-N-acetyl-alpha-D-glucosamine</name>
        <dbReference type="ChEBI" id="CHEBI:57705"/>
    </ligand>
</feature>
<name>MURG_PROM5</name>
<protein>
    <recommendedName>
        <fullName evidence="1">UDP-N-acetylglucosamine--N-acetylmuramyl-(pentapeptide) pyrophosphoryl-undecaprenol N-acetylglucosamine transferase</fullName>
        <ecNumber evidence="1">2.4.1.227</ecNumber>
    </recommendedName>
    <alternativeName>
        <fullName evidence="1">Undecaprenyl-PP-MurNAc-pentapeptide-UDPGlcNAc GlcNAc transferase</fullName>
    </alternativeName>
</protein>
<proteinExistence type="inferred from homology"/>
<evidence type="ECO:0000255" key="1">
    <source>
        <dbReference type="HAMAP-Rule" id="MF_00033"/>
    </source>
</evidence>
<accession>A2BUH4</accession>
<dbReference type="EC" id="2.4.1.227" evidence="1"/>
<dbReference type="EMBL" id="CP000552">
    <property type="protein sequence ID" value="ABM71435.1"/>
    <property type="molecule type" value="Genomic_DNA"/>
</dbReference>
<dbReference type="RefSeq" id="WP_011819549.1">
    <property type="nucleotide sequence ID" value="NC_008817.1"/>
</dbReference>
<dbReference type="SMR" id="A2BUH4"/>
<dbReference type="STRING" id="167542.P9515_02261"/>
<dbReference type="CAZy" id="GT28">
    <property type="family name" value="Glycosyltransferase Family 28"/>
</dbReference>
<dbReference type="GeneID" id="60201841"/>
<dbReference type="KEGG" id="pmc:P9515_02261"/>
<dbReference type="eggNOG" id="COG0707">
    <property type="taxonomic scope" value="Bacteria"/>
</dbReference>
<dbReference type="HOGENOM" id="CLU_037404_0_0_3"/>
<dbReference type="OrthoDB" id="9808936at2"/>
<dbReference type="UniPathway" id="UPA00219"/>
<dbReference type="Proteomes" id="UP000001589">
    <property type="component" value="Chromosome"/>
</dbReference>
<dbReference type="GO" id="GO:0005886">
    <property type="term" value="C:plasma membrane"/>
    <property type="evidence" value="ECO:0007669"/>
    <property type="project" value="UniProtKB-SubCell"/>
</dbReference>
<dbReference type="GO" id="GO:0051991">
    <property type="term" value="F:UDP-N-acetyl-D-glucosamine:N-acetylmuramoyl-L-alanyl-D-glutamyl-meso-2,6-diaminopimelyl-D-alanyl-D-alanine-diphosphoundecaprenol 4-beta-N-acetylglucosaminlytransferase activity"/>
    <property type="evidence" value="ECO:0007669"/>
    <property type="project" value="RHEA"/>
</dbReference>
<dbReference type="GO" id="GO:0050511">
    <property type="term" value="F:undecaprenyldiphospho-muramoylpentapeptide beta-N-acetylglucosaminyltransferase activity"/>
    <property type="evidence" value="ECO:0007669"/>
    <property type="project" value="UniProtKB-UniRule"/>
</dbReference>
<dbReference type="GO" id="GO:0005975">
    <property type="term" value="P:carbohydrate metabolic process"/>
    <property type="evidence" value="ECO:0007669"/>
    <property type="project" value="InterPro"/>
</dbReference>
<dbReference type="GO" id="GO:0051301">
    <property type="term" value="P:cell division"/>
    <property type="evidence" value="ECO:0007669"/>
    <property type="project" value="UniProtKB-KW"/>
</dbReference>
<dbReference type="GO" id="GO:0071555">
    <property type="term" value="P:cell wall organization"/>
    <property type="evidence" value="ECO:0007669"/>
    <property type="project" value="UniProtKB-KW"/>
</dbReference>
<dbReference type="GO" id="GO:0030259">
    <property type="term" value="P:lipid glycosylation"/>
    <property type="evidence" value="ECO:0007669"/>
    <property type="project" value="UniProtKB-UniRule"/>
</dbReference>
<dbReference type="GO" id="GO:0009252">
    <property type="term" value="P:peptidoglycan biosynthetic process"/>
    <property type="evidence" value="ECO:0007669"/>
    <property type="project" value="UniProtKB-UniRule"/>
</dbReference>
<dbReference type="GO" id="GO:0008360">
    <property type="term" value="P:regulation of cell shape"/>
    <property type="evidence" value="ECO:0007669"/>
    <property type="project" value="UniProtKB-KW"/>
</dbReference>
<dbReference type="CDD" id="cd03785">
    <property type="entry name" value="GT28_MurG"/>
    <property type="match status" value="1"/>
</dbReference>
<dbReference type="Gene3D" id="3.40.50.2000">
    <property type="entry name" value="Glycogen Phosphorylase B"/>
    <property type="match status" value="2"/>
</dbReference>
<dbReference type="HAMAP" id="MF_00033">
    <property type="entry name" value="MurG"/>
    <property type="match status" value="1"/>
</dbReference>
<dbReference type="InterPro" id="IPR006009">
    <property type="entry name" value="GlcNAc_MurG"/>
</dbReference>
<dbReference type="InterPro" id="IPR007235">
    <property type="entry name" value="Glyco_trans_28_C"/>
</dbReference>
<dbReference type="InterPro" id="IPR004276">
    <property type="entry name" value="GlycoTrans_28_N"/>
</dbReference>
<dbReference type="PANTHER" id="PTHR21015:SF22">
    <property type="entry name" value="GLYCOSYLTRANSFERASE"/>
    <property type="match status" value="1"/>
</dbReference>
<dbReference type="PANTHER" id="PTHR21015">
    <property type="entry name" value="UDP-N-ACETYLGLUCOSAMINE--N-ACETYLMURAMYL-(PENTAPEPTIDE) PYROPHOSPHORYL-UNDECAPRENOL N-ACETYLGLUCOSAMINE TRANSFERASE 1"/>
    <property type="match status" value="1"/>
</dbReference>
<dbReference type="Pfam" id="PF04101">
    <property type="entry name" value="Glyco_tran_28_C"/>
    <property type="match status" value="1"/>
</dbReference>
<dbReference type="Pfam" id="PF03033">
    <property type="entry name" value="Glyco_transf_28"/>
    <property type="match status" value="1"/>
</dbReference>
<dbReference type="SUPFAM" id="SSF53756">
    <property type="entry name" value="UDP-Glycosyltransferase/glycogen phosphorylase"/>
    <property type="match status" value="1"/>
</dbReference>
<organism>
    <name type="scientific">Prochlorococcus marinus (strain MIT 9515)</name>
    <dbReference type="NCBI Taxonomy" id="167542"/>
    <lineage>
        <taxon>Bacteria</taxon>
        <taxon>Bacillati</taxon>
        <taxon>Cyanobacteriota</taxon>
        <taxon>Cyanophyceae</taxon>
        <taxon>Synechococcales</taxon>
        <taxon>Prochlorococcaceae</taxon>
        <taxon>Prochlorococcus</taxon>
    </lineage>
</organism>
<gene>
    <name evidence="1" type="primary">murG</name>
    <name type="ordered locus">P9515_02261</name>
</gene>
<comment type="function">
    <text evidence="1">Cell wall formation. Catalyzes the transfer of a GlcNAc subunit on undecaprenyl-pyrophosphoryl-MurNAc-pentapeptide (lipid intermediate I) to form undecaprenyl-pyrophosphoryl-MurNAc-(pentapeptide)GlcNAc (lipid intermediate II).</text>
</comment>
<comment type="catalytic activity">
    <reaction evidence="1">
        <text>di-trans,octa-cis-undecaprenyl diphospho-N-acetyl-alpha-D-muramoyl-L-alanyl-D-glutamyl-meso-2,6-diaminopimeloyl-D-alanyl-D-alanine + UDP-N-acetyl-alpha-D-glucosamine = di-trans,octa-cis-undecaprenyl diphospho-[N-acetyl-alpha-D-glucosaminyl-(1-&gt;4)]-N-acetyl-alpha-D-muramoyl-L-alanyl-D-glutamyl-meso-2,6-diaminopimeloyl-D-alanyl-D-alanine + UDP + H(+)</text>
        <dbReference type="Rhea" id="RHEA:31227"/>
        <dbReference type="ChEBI" id="CHEBI:15378"/>
        <dbReference type="ChEBI" id="CHEBI:57705"/>
        <dbReference type="ChEBI" id="CHEBI:58223"/>
        <dbReference type="ChEBI" id="CHEBI:61387"/>
        <dbReference type="ChEBI" id="CHEBI:61388"/>
        <dbReference type="EC" id="2.4.1.227"/>
    </reaction>
</comment>
<comment type="pathway">
    <text evidence="1">Cell wall biogenesis; peptidoglycan biosynthesis.</text>
</comment>
<comment type="subcellular location">
    <subcellularLocation>
        <location evidence="1">Cell inner membrane</location>
        <topology evidence="1">Peripheral membrane protein</topology>
        <orientation evidence="1">Cytoplasmic side</orientation>
    </subcellularLocation>
</comment>
<comment type="similarity">
    <text evidence="1">Belongs to the glycosyltransferase 28 family. MurG subfamily.</text>
</comment>
<reference key="1">
    <citation type="journal article" date="2007" name="PLoS Genet.">
        <title>Patterns and implications of gene gain and loss in the evolution of Prochlorococcus.</title>
        <authorList>
            <person name="Kettler G.C."/>
            <person name="Martiny A.C."/>
            <person name="Huang K."/>
            <person name="Zucker J."/>
            <person name="Coleman M.L."/>
            <person name="Rodrigue S."/>
            <person name="Chen F."/>
            <person name="Lapidus A."/>
            <person name="Ferriera S."/>
            <person name="Johnson J."/>
            <person name="Steglich C."/>
            <person name="Church G.M."/>
            <person name="Richardson P."/>
            <person name="Chisholm S.W."/>
        </authorList>
    </citation>
    <scope>NUCLEOTIDE SEQUENCE [LARGE SCALE GENOMIC DNA]</scope>
    <source>
        <strain>MIT 9515</strain>
    </source>
</reference>
<sequence>MSKERNNLLIAASGTGGHIFPALAVSKEVEKYWNMHWLGVEKRLDSKFVPRKYNLLTLNLETPQKSIFILFQYLKILYSTFNIIKILKEKKINLVFTTGGFISAPTILAAKLLNIPVIIHESNLIPGTVTKYFGFLCEFVLIGFKDTNAYLKNCKTIFTGTPLRPEFYKTNPLPEWVPRGKGPLLIVMGGSQGAKRINEIFYESLDLLIKQNFRIVHIVGEHNINIPRKIKSNNYVQKKFTNQIASLMQNCDLVISRSGAGTINELIQTKKPSILVPYPNSKNNHQEKNAIILSSIGGAILINQDKISKVFFQETLKRIFKVKKNKGKPTYEILDLMKENMKNLTSLKSTNKIKNLINYFLKEF</sequence>